<organism>
    <name type="scientific">Methanococcus maripaludis (strain DSM 14266 / JCM 13030 / NBRC 101832 / S2 / LL)</name>
    <dbReference type="NCBI Taxonomy" id="267377"/>
    <lineage>
        <taxon>Archaea</taxon>
        <taxon>Methanobacteriati</taxon>
        <taxon>Methanobacteriota</taxon>
        <taxon>Methanomada group</taxon>
        <taxon>Methanococci</taxon>
        <taxon>Methanococcales</taxon>
        <taxon>Methanococcaceae</taxon>
        <taxon>Methanococcus</taxon>
    </lineage>
</organism>
<gene>
    <name evidence="1" type="primary">lig</name>
    <name type="ordered locus">MMP0970</name>
</gene>
<accession>Q6LYM1</accession>
<feature type="chain" id="PRO_0000059607" description="DNA ligase">
    <location>
        <begin position="1"/>
        <end position="573"/>
    </location>
</feature>
<feature type="active site" description="N6-AMP-lysine intermediate" evidence="1">
    <location>
        <position position="252"/>
    </location>
</feature>
<feature type="binding site" evidence="1">
    <location>
        <position position="250"/>
    </location>
    <ligand>
        <name>ATP</name>
        <dbReference type="ChEBI" id="CHEBI:30616"/>
    </ligand>
</feature>
<feature type="binding site" evidence="1">
    <location>
        <position position="257"/>
    </location>
    <ligand>
        <name>ATP</name>
        <dbReference type="ChEBI" id="CHEBI:30616"/>
    </ligand>
</feature>
<feature type="binding site" evidence="1">
    <location>
        <position position="272"/>
    </location>
    <ligand>
        <name>ATP</name>
        <dbReference type="ChEBI" id="CHEBI:30616"/>
    </ligand>
</feature>
<feature type="binding site" evidence="1">
    <location>
        <position position="301"/>
    </location>
    <ligand>
        <name>ATP</name>
        <dbReference type="ChEBI" id="CHEBI:30616"/>
    </ligand>
</feature>
<feature type="binding site" evidence="1">
    <location>
        <position position="342"/>
    </location>
    <ligand>
        <name>ATP</name>
        <dbReference type="ChEBI" id="CHEBI:30616"/>
    </ligand>
</feature>
<feature type="binding site" evidence="1">
    <location>
        <position position="432"/>
    </location>
    <ligand>
        <name>ATP</name>
        <dbReference type="ChEBI" id="CHEBI:30616"/>
    </ligand>
</feature>
<feature type="binding site" evidence="1">
    <location>
        <position position="438"/>
    </location>
    <ligand>
        <name>ATP</name>
        <dbReference type="ChEBI" id="CHEBI:30616"/>
    </ligand>
</feature>
<name>DNLI_METMP</name>
<comment type="function">
    <text evidence="1">DNA ligase that seals nicks in double-stranded DNA during DNA replication, DNA recombination and DNA repair.</text>
</comment>
<comment type="catalytic activity">
    <reaction evidence="1">
        <text>ATP + (deoxyribonucleotide)n-3'-hydroxyl + 5'-phospho-(deoxyribonucleotide)m = (deoxyribonucleotide)n+m + AMP + diphosphate.</text>
        <dbReference type="EC" id="6.5.1.1"/>
    </reaction>
</comment>
<comment type="cofactor">
    <cofactor evidence="1">
        <name>Mg(2+)</name>
        <dbReference type="ChEBI" id="CHEBI:18420"/>
    </cofactor>
</comment>
<comment type="similarity">
    <text evidence="1">Belongs to the ATP-dependent DNA ligase family.</text>
</comment>
<reference key="1">
    <citation type="journal article" date="2004" name="J. Bacteriol.">
        <title>Complete genome sequence of the genetically tractable hydrogenotrophic methanogen Methanococcus maripaludis.</title>
        <authorList>
            <person name="Hendrickson E.L."/>
            <person name="Kaul R."/>
            <person name="Zhou Y."/>
            <person name="Bovee D."/>
            <person name="Chapman P."/>
            <person name="Chung J."/>
            <person name="Conway de Macario E."/>
            <person name="Dodsworth J.A."/>
            <person name="Gillett W."/>
            <person name="Graham D.E."/>
            <person name="Hackett M."/>
            <person name="Haydock A.K."/>
            <person name="Kang A."/>
            <person name="Land M.L."/>
            <person name="Levy R."/>
            <person name="Lie T.J."/>
            <person name="Major T.A."/>
            <person name="Moore B.C."/>
            <person name="Porat I."/>
            <person name="Palmeiri A."/>
            <person name="Rouse G."/>
            <person name="Saenphimmachak C."/>
            <person name="Soell D."/>
            <person name="Van Dien S."/>
            <person name="Wang T."/>
            <person name="Whitman W.B."/>
            <person name="Xia Q."/>
            <person name="Zhang Y."/>
            <person name="Larimer F.W."/>
            <person name="Olson M.V."/>
            <person name="Leigh J.A."/>
        </authorList>
    </citation>
    <scope>NUCLEOTIDE SEQUENCE [LARGE SCALE GENOMIC DNA]</scope>
    <source>
        <strain>DSM 14266 / JCM 13030 / NBRC 101832 / S2 / LL</strain>
    </source>
</reference>
<evidence type="ECO:0000255" key="1">
    <source>
        <dbReference type="HAMAP-Rule" id="MF_00407"/>
    </source>
</evidence>
<proteinExistence type="inferred from homology"/>
<sequence length="573" mass="65752">MLFSDFCKILDKIEKTTKRLEKTDYFVELIDFIKTSEKPENLKQVSQITIGRVFAEFENKEIGIGPNLLLEAVKTTGIPEKDLKSKIKETGDIGTAVENLSSNIKQVSLFSQALTLEEVYSTLKKLSEIEGNSSQKKKTRIISNLLILADPVESRYISRLILEDMRIGMNIPTILASFSNYFNVNKESVEKIYAVTNDIGLLGEKLISGSDIENDPELKLKVFRPIKPMLAQLTPSIEDAMIETKMPQFETKYDGARVQVHKSNGDVKIYSRRLENITNSVPELVEEIKKLDIDNIILEGECVAMDLDSGKPRPFQDILRRFRRKYNIDKMAEKIALRIYFFDVLYYNRGLIDTPLKTRREILEKLFGTNNWDSELEKIKKEIFSSKMLFSSFKLNSGDPNLVKEFFNWSLSIGHEGIMIKNPDAPYTPGSRVKTMYKVKPTLENLDVVVTRAKIGMGKRKDWYGSYELSVKDNDGNLHVIGNVGSGLTEDDLEKLTKIVNEIKIEDLGEEVILEPKIVLEVTYEEIQTSEKYEMGYALRFPRVVQIREDKSINDINTLDDVKKIYEIERNRK</sequence>
<dbReference type="EC" id="6.5.1.1" evidence="1"/>
<dbReference type="EMBL" id="BX950229">
    <property type="protein sequence ID" value="CAF30526.1"/>
    <property type="molecule type" value="Genomic_DNA"/>
</dbReference>
<dbReference type="RefSeq" id="WP_011170914.1">
    <property type="nucleotide sequence ID" value="NC_005791.1"/>
</dbReference>
<dbReference type="SMR" id="Q6LYM1"/>
<dbReference type="STRING" id="267377.MMP0970"/>
<dbReference type="EnsemblBacteria" id="CAF30526">
    <property type="protein sequence ID" value="CAF30526"/>
    <property type="gene ID" value="MMP0970"/>
</dbReference>
<dbReference type="GeneID" id="2761378"/>
<dbReference type="KEGG" id="mmp:MMP0970"/>
<dbReference type="PATRIC" id="fig|267377.15.peg.998"/>
<dbReference type="eggNOG" id="arCOG01347">
    <property type="taxonomic scope" value="Archaea"/>
</dbReference>
<dbReference type="HOGENOM" id="CLU_005138_6_0_2"/>
<dbReference type="OrthoDB" id="31274at2157"/>
<dbReference type="Proteomes" id="UP000000590">
    <property type="component" value="Chromosome"/>
</dbReference>
<dbReference type="GO" id="GO:0005524">
    <property type="term" value="F:ATP binding"/>
    <property type="evidence" value="ECO:0007669"/>
    <property type="project" value="UniProtKB-UniRule"/>
</dbReference>
<dbReference type="GO" id="GO:0003677">
    <property type="term" value="F:DNA binding"/>
    <property type="evidence" value="ECO:0007669"/>
    <property type="project" value="InterPro"/>
</dbReference>
<dbReference type="GO" id="GO:0003910">
    <property type="term" value="F:DNA ligase (ATP) activity"/>
    <property type="evidence" value="ECO:0007669"/>
    <property type="project" value="UniProtKB-UniRule"/>
</dbReference>
<dbReference type="GO" id="GO:0046872">
    <property type="term" value="F:metal ion binding"/>
    <property type="evidence" value="ECO:0007669"/>
    <property type="project" value="UniProtKB-KW"/>
</dbReference>
<dbReference type="GO" id="GO:0051301">
    <property type="term" value="P:cell division"/>
    <property type="evidence" value="ECO:0007669"/>
    <property type="project" value="UniProtKB-KW"/>
</dbReference>
<dbReference type="GO" id="GO:0071897">
    <property type="term" value="P:DNA biosynthetic process"/>
    <property type="evidence" value="ECO:0007669"/>
    <property type="project" value="InterPro"/>
</dbReference>
<dbReference type="GO" id="GO:0006310">
    <property type="term" value="P:DNA recombination"/>
    <property type="evidence" value="ECO:0007669"/>
    <property type="project" value="UniProtKB-UniRule"/>
</dbReference>
<dbReference type="GO" id="GO:0006281">
    <property type="term" value="P:DNA repair"/>
    <property type="evidence" value="ECO:0007669"/>
    <property type="project" value="UniProtKB-UniRule"/>
</dbReference>
<dbReference type="GO" id="GO:0006273">
    <property type="term" value="P:lagging strand elongation"/>
    <property type="evidence" value="ECO:0007669"/>
    <property type="project" value="TreeGrafter"/>
</dbReference>
<dbReference type="CDD" id="cd07901">
    <property type="entry name" value="Adenylation_DNA_ligase_Arch_LigB"/>
    <property type="match status" value="1"/>
</dbReference>
<dbReference type="FunFam" id="1.10.3260.10:FF:000007">
    <property type="entry name" value="DNA ligase"/>
    <property type="match status" value="1"/>
</dbReference>
<dbReference type="Gene3D" id="1.10.3260.10">
    <property type="entry name" value="DNA ligase, ATP-dependent, N-terminal domain"/>
    <property type="match status" value="1"/>
</dbReference>
<dbReference type="Gene3D" id="3.30.470.30">
    <property type="entry name" value="DNA ligase/mRNA capping enzyme"/>
    <property type="match status" value="1"/>
</dbReference>
<dbReference type="Gene3D" id="2.40.50.140">
    <property type="entry name" value="Nucleic acid-binding proteins"/>
    <property type="match status" value="1"/>
</dbReference>
<dbReference type="HAMAP" id="MF_00407">
    <property type="entry name" value="DNA_ligase"/>
    <property type="match status" value="1"/>
</dbReference>
<dbReference type="InterPro" id="IPR050191">
    <property type="entry name" value="ATP-dep_DNA_ligase"/>
</dbReference>
<dbReference type="InterPro" id="IPR022865">
    <property type="entry name" value="DNA_ligae_ATP-dep_bac/arc"/>
</dbReference>
<dbReference type="InterPro" id="IPR000977">
    <property type="entry name" value="DNA_ligase_ATP-dep"/>
</dbReference>
<dbReference type="InterPro" id="IPR012309">
    <property type="entry name" value="DNA_ligase_ATP-dep_C"/>
</dbReference>
<dbReference type="InterPro" id="IPR012310">
    <property type="entry name" value="DNA_ligase_ATP-dep_cent"/>
</dbReference>
<dbReference type="InterPro" id="IPR016059">
    <property type="entry name" value="DNA_ligase_ATP-dep_CS"/>
</dbReference>
<dbReference type="InterPro" id="IPR012308">
    <property type="entry name" value="DNA_ligase_ATP-dep_N"/>
</dbReference>
<dbReference type="InterPro" id="IPR036599">
    <property type="entry name" value="DNA_ligase_N_sf"/>
</dbReference>
<dbReference type="InterPro" id="IPR012340">
    <property type="entry name" value="NA-bd_OB-fold"/>
</dbReference>
<dbReference type="NCBIfam" id="TIGR00574">
    <property type="entry name" value="dnl1"/>
    <property type="match status" value="1"/>
</dbReference>
<dbReference type="PANTHER" id="PTHR45674:SF7">
    <property type="entry name" value="DNA LIGASE"/>
    <property type="match status" value="1"/>
</dbReference>
<dbReference type="PANTHER" id="PTHR45674">
    <property type="entry name" value="DNA LIGASE 1/3 FAMILY MEMBER"/>
    <property type="match status" value="1"/>
</dbReference>
<dbReference type="Pfam" id="PF04679">
    <property type="entry name" value="DNA_ligase_A_C"/>
    <property type="match status" value="1"/>
</dbReference>
<dbReference type="Pfam" id="PF01068">
    <property type="entry name" value="DNA_ligase_A_M"/>
    <property type="match status" value="1"/>
</dbReference>
<dbReference type="Pfam" id="PF04675">
    <property type="entry name" value="DNA_ligase_A_N"/>
    <property type="match status" value="1"/>
</dbReference>
<dbReference type="SUPFAM" id="SSF117018">
    <property type="entry name" value="ATP-dependent DNA ligase DNA-binding domain"/>
    <property type="match status" value="1"/>
</dbReference>
<dbReference type="SUPFAM" id="SSF56091">
    <property type="entry name" value="DNA ligase/mRNA capping enzyme, catalytic domain"/>
    <property type="match status" value="1"/>
</dbReference>
<dbReference type="SUPFAM" id="SSF50249">
    <property type="entry name" value="Nucleic acid-binding proteins"/>
    <property type="match status" value="1"/>
</dbReference>
<dbReference type="PROSITE" id="PS00697">
    <property type="entry name" value="DNA_LIGASE_A1"/>
    <property type="match status" value="1"/>
</dbReference>
<dbReference type="PROSITE" id="PS00333">
    <property type="entry name" value="DNA_LIGASE_A2"/>
    <property type="match status" value="1"/>
</dbReference>
<dbReference type="PROSITE" id="PS50160">
    <property type="entry name" value="DNA_LIGASE_A3"/>
    <property type="match status" value="1"/>
</dbReference>
<protein>
    <recommendedName>
        <fullName evidence="1">DNA ligase</fullName>
        <ecNumber evidence="1">6.5.1.1</ecNumber>
    </recommendedName>
    <alternativeName>
        <fullName evidence="1">Polydeoxyribonucleotide synthase [ATP]</fullName>
    </alternativeName>
</protein>
<keyword id="KW-0067">ATP-binding</keyword>
<keyword id="KW-0131">Cell cycle</keyword>
<keyword id="KW-0132">Cell division</keyword>
<keyword id="KW-0227">DNA damage</keyword>
<keyword id="KW-0233">DNA recombination</keyword>
<keyword id="KW-0234">DNA repair</keyword>
<keyword id="KW-0235">DNA replication</keyword>
<keyword id="KW-0436">Ligase</keyword>
<keyword id="KW-0460">Magnesium</keyword>
<keyword id="KW-0479">Metal-binding</keyword>
<keyword id="KW-0547">Nucleotide-binding</keyword>
<keyword id="KW-1185">Reference proteome</keyword>